<dbReference type="EMBL" id="FM209186">
    <property type="protein sequence ID" value="CAW28205.1"/>
    <property type="molecule type" value="Genomic_DNA"/>
</dbReference>
<dbReference type="RefSeq" id="WP_003088034.1">
    <property type="nucleotide sequence ID" value="NC_011770.1"/>
</dbReference>
<dbReference type="SMR" id="B7VB28"/>
<dbReference type="GeneID" id="77221556"/>
<dbReference type="KEGG" id="pag:PLES_34781"/>
<dbReference type="HOGENOM" id="CLU_094569_0_0_6"/>
<dbReference type="GO" id="GO:0051539">
    <property type="term" value="F:4 iron, 4 sulfur cluster binding"/>
    <property type="evidence" value="ECO:0007669"/>
    <property type="project" value="UniProtKB-UniRule"/>
</dbReference>
<dbReference type="GO" id="GO:0005506">
    <property type="term" value="F:iron ion binding"/>
    <property type="evidence" value="ECO:0007669"/>
    <property type="project" value="InterPro"/>
</dbReference>
<dbReference type="GO" id="GO:0016226">
    <property type="term" value="P:iron-sulfur cluster assembly"/>
    <property type="evidence" value="ECO:0007669"/>
    <property type="project" value="UniProtKB-UniRule"/>
</dbReference>
<dbReference type="GO" id="GO:0051604">
    <property type="term" value="P:protein maturation"/>
    <property type="evidence" value="ECO:0007669"/>
    <property type="project" value="UniProtKB-UniRule"/>
</dbReference>
<dbReference type="Gene3D" id="3.30.300.130">
    <property type="entry name" value="Fe-S cluster assembly (FSCA)"/>
    <property type="match status" value="1"/>
</dbReference>
<dbReference type="Gene3D" id="2.60.300.12">
    <property type="entry name" value="HesB-like domain"/>
    <property type="match status" value="1"/>
</dbReference>
<dbReference type="HAMAP" id="MF_01637">
    <property type="entry name" value="Fe_S_biogen_NfuA"/>
    <property type="match status" value="1"/>
</dbReference>
<dbReference type="InterPro" id="IPR017726">
    <property type="entry name" value="Fe/S_biogenesis_protein_NfuA"/>
</dbReference>
<dbReference type="InterPro" id="IPR000361">
    <property type="entry name" value="FeS_biogenesis"/>
</dbReference>
<dbReference type="InterPro" id="IPR034904">
    <property type="entry name" value="FSCA_dom_sf"/>
</dbReference>
<dbReference type="InterPro" id="IPR035903">
    <property type="entry name" value="HesB-like_dom_sf"/>
</dbReference>
<dbReference type="InterPro" id="IPR001075">
    <property type="entry name" value="NIF_FeS_clus_asmbl_NifU_C"/>
</dbReference>
<dbReference type="NCBIfam" id="TIGR03341">
    <property type="entry name" value="YhgI_GntY"/>
    <property type="match status" value="1"/>
</dbReference>
<dbReference type="PANTHER" id="PTHR11178:SF51">
    <property type="entry name" value="FE_S BIOGENESIS PROTEIN NFUA"/>
    <property type="match status" value="1"/>
</dbReference>
<dbReference type="PANTHER" id="PTHR11178">
    <property type="entry name" value="IRON-SULFUR CLUSTER SCAFFOLD PROTEIN NFU-RELATED"/>
    <property type="match status" value="1"/>
</dbReference>
<dbReference type="Pfam" id="PF01521">
    <property type="entry name" value="Fe-S_biosyn"/>
    <property type="match status" value="1"/>
</dbReference>
<dbReference type="Pfam" id="PF01106">
    <property type="entry name" value="NifU"/>
    <property type="match status" value="1"/>
</dbReference>
<dbReference type="SUPFAM" id="SSF117916">
    <property type="entry name" value="Fe-S cluster assembly (FSCA) domain-like"/>
    <property type="match status" value="1"/>
</dbReference>
<dbReference type="SUPFAM" id="SSF89360">
    <property type="entry name" value="HesB-like domain"/>
    <property type="match status" value="1"/>
</dbReference>
<keyword id="KW-0004">4Fe-4S</keyword>
<keyword id="KW-0408">Iron</keyword>
<keyword id="KW-0411">Iron-sulfur</keyword>
<keyword id="KW-0479">Metal-binding</keyword>
<gene>
    <name evidence="1" type="primary">nfuA</name>
    <name type="ordered locus">PLES_34781</name>
</gene>
<sequence length="194" mass="21136">MSAITITEAAQAYLAELLEKQSTPGIGIRIFITQPGTQYAETCIAYCKPGEEKVEDTAIALKDFTAWIDAVSEPFLEDAVVDYATDRMGGQLTIKAPNAKVPMVNEDSPITERINYYLQTEINPGLASHGGQVSLVDVVEDNIAVLRFGGGCQGCGMVDMTLKDGVEKTLIERIPELKGVRDVTDHSNKENAYY</sequence>
<proteinExistence type="inferred from homology"/>
<feature type="chain" id="PRO_1000186759" description="Fe/S biogenesis protein NfuA">
    <location>
        <begin position="1"/>
        <end position="194"/>
    </location>
</feature>
<feature type="binding site" evidence="1">
    <location>
        <position position="152"/>
    </location>
    <ligand>
        <name>[4Fe-4S] cluster</name>
        <dbReference type="ChEBI" id="CHEBI:49883"/>
    </ligand>
</feature>
<feature type="binding site" evidence="1">
    <location>
        <position position="155"/>
    </location>
    <ligand>
        <name>[4Fe-4S] cluster</name>
        <dbReference type="ChEBI" id="CHEBI:49883"/>
    </ligand>
</feature>
<evidence type="ECO:0000255" key="1">
    <source>
        <dbReference type="HAMAP-Rule" id="MF_01637"/>
    </source>
</evidence>
<reference key="1">
    <citation type="journal article" date="2009" name="Genome Res.">
        <title>Newly introduced genomic prophage islands are critical determinants of in vivo competitiveness in the Liverpool epidemic strain of Pseudomonas aeruginosa.</title>
        <authorList>
            <person name="Winstanley C."/>
            <person name="Langille M.G.I."/>
            <person name="Fothergill J.L."/>
            <person name="Kukavica-Ibrulj I."/>
            <person name="Paradis-Bleau C."/>
            <person name="Sanschagrin F."/>
            <person name="Thomson N.R."/>
            <person name="Winsor G.L."/>
            <person name="Quail M.A."/>
            <person name="Lennard N."/>
            <person name="Bignell A."/>
            <person name="Clarke L."/>
            <person name="Seeger K."/>
            <person name="Saunders D."/>
            <person name="Harris D."/>
            <person name="Parkhill J."/>
            <person name="Hancock R.E.W."/>
            <person name="Brinkman F.S.L."/>
            <person name="Levesque R.C."/>
        </authorList>
    </citation>
    <scope>NUCLEOTIDE SEQUENCE [LARGE SCALE GENOMIC DNA]</scope>
    <source>
        <strain>LESB58</strain>
    </source>
</reference>
<accession>B7VB28</accession>
<comment type="function">
    <text evidence="1">Involved in iron-sulfur cluster biogenesis. Binds a 4Fe-4S cluster, can transfer this cluster to apoproteins, and thereby intervenes in the maturation of Fe/S proteins. Could also act as a scaffold/chaperone for damaged Fe/S proteins.</text>
</comment>
<comment type="cofactor">
    <cofactor evidence="1">
        <name>[4Fe-4S] cluster</name>
        <dbReference type="ChEBI" id="CHEBI:49883"/>
    </cofactor>
    <text evidence="1">Binds 1 [4Fe-4S] cluster per subunit. The cluster is presumably bound at the interface of two monomers.</text>
</comment>
<comment type="subunit">
    <text evidence="1">Homodimer.</text>
</comment>
<comment type="similarity">
    <text evidence="1">Belongs to the NfuA family.</text>
</comment>
<name>NFUA_PSEA8</name>
<protein>
    <recommendedName>
        <fullName evidence="1">Fe/S biogenesis protein NfuA</fullName>
    </recommendedName>
</protein>
<organism>
    <name type="scientific">Pseudomonas aeruginosa (strain LESB58)</name>
    <dbReference type="NCBI Taxonomy" id="557722"/>
    <lineage>
        <taxon>Bacteria</taxon>
        <taxon>Pseudomonadati</taxon>
        <taxon>Pseudomonadota</taxon>
        <taxon>Gammaproteobacteria</taxon>
        <taxon>Pseudomonadales</taxon>
        <taxon>Pseudomonadaceae</taxon>
        <taxon>Pseudomonas</taxon>
    </lineage>
</organism>